<reference key="1">
    <citation type="submission" date="2011-12" db="EMBL/GenBank/DDBJ databases">
        <title>Complete genome sequence of Streptomyces cattleya strain DSM 46488.</title>
        <authorList>
            <person name="Ou H.-Y."/>
            <person name="Li P."/>
            <person name="Zhao C."/>
            <person name="O'Hagan D."/>
            <person name="Deng Z."/>
        </authorList>
    </citation>
    <scope>NUCLEOTIDE SEQUENCE [LARGE SCALE GENOMIC DNA]</scope>
    <source>
        <strain>ATCC 35852 / DSM 46488 / JCM 4925 / NBRC 14057 / NCIMB 11928 / NRRL 8057 / MA-4297</strain>
    </source>
</reference>
<reference key="2">
    <citation type="journal article" date="2019" name="Nature">
        <title>Discovery of a pathway for terminal-alkyne amino acid biosynthesis.</title>
        <authorList>
            <person name="Marchand J.A."/>
            <person name="Neugebauer M.E."/>
            <person name="Ing M.C."/>
            <person name="Lin C.I."/>
            <person name="Pelton J.G."/>
            <person name="Chang M.C.Y."/>
        </authorList>
    </citation>
    <scope>PROBABLE FUNCTION</scope>
    <source>
        <strain>ATCC 35852 / DSM 46488 / JCM 4925 / NBRC 14057 / NCIMB 11928 / NRRL 8057 / MA-4297</strain>
    </source>
</reference>
<geneLocation type="plasmid">
    <name>pSCATT</name>
</geneLocation>
<dbReference type="EMBL" id="CP003229">
    <property type="protein sequence ID" value="AEW98885.1"/>
    <property type="molecule type" value="Genomic_DNA"/>
</dbReference>
<dbReference type="RefSeq" id="WP_014151493.1">
    <property type="nucleotide sequence ID" value="NC_016113.1"/>
</dbReference>
<dbReference type="SMR" id="F8JJ22"/>
<dbReference type="KEGG" id="sct:SCAT_p1044"/>
<dbReference type="KEGG" id="scy:SCATT_p06920"/>
<dbReference type="PATRIC" id="fig|1003195.11.peg.1002"/>
<dbReference type="HOGENOM" id="CLU_033863_4_1_11"/>
<dbReference type="OrthoDB" id="3744378at2"/>
<dbReference type="Proteomes" id="UP000007842">
    <property type="component" value="Plasmid pSCATT"/>
</dbReference>
<dbReference type="GO" id="GO:0005886">
    <property type="term" value="C:plasma membrane"/>
    <property type="evidence" value="ECO:0007669"/>
    <property type="project" value="UniProtKB-SubCell"/>
</dbReference>
<dbReference type="GO" id="GO:0006865">
    <property type="term" value="P:amino acid transport"/>
    <property type="evidence" value="ECO:0007669"/>
    <property type="project" value="UniProtKB-KW"/>
</dbReference>
<dbReference type="Gene3D" id="1.10.3730.20">
    <property type="match status" value="1"/>
</dbReference>
<dbReference type="InterPro" id="IPR052756">
    <property type="entry name" value="Alkyne_AA_exporter"/>
</dbReference>
<dbReference type="InterPro" id="IPR000620">
    <property type="entry name" value="EamA_dom"/>
</dbReference>
<dbReference type="PANTHER" id="PTHR12715:SF4">
    <property type="entry name" value="EAMA DOMAIN-CONTAINING PROTEIN"/>
    <property type="match status" value="1"/>
</dbReference>
<dbReference type="PANTHER" id="PTHR12715">
    <property type="entry name" value="TRANSPORTER, DRUG/METABOLITE EXPORTER FAMILY"/>
    <property type="match status" value="1"/>
</dbReference>
<dbReference type="Pfam" id="PF00892">
    <property type="entry name" value="EamA"/>
    <property type="match status" value="2"/>
</dbReference>
<dbReference type="SUPFAM" id="SSF103481">
    <property type="entry name" value="Multidrug resistance efflux transporter EmrE"/>
    <property type="match status" value="2"/>
</dbReference>
<protein>
    <recommendedName>
        <fullName evidence="4">Probable terminal-alkyne amino-acid exporter</fullName>
    </recommendedName>
</protein>
<comment type="function">
    <text evidence="4">Probably involved in the export of terminal alkyne-containing amino acids, namely L-propargylglycine (Pra) and L-beta-ethynylserine, that are antibiotics synthesized by enzymes encoded in the same gene cluster.</text>
</comment>
<comment type="subcellular location">
    <subcellularLocation>
        <location evidence="1">Cell membrane</location>
        <topology evidence="1">Multi-pass membrane protein</topology>
    </subcellularLocation>
</comment>
<comment type="similarity">
    <text evidence="3">Belongs to the EamA transporter family.</text>
</comment>
<feature type="chain" id="PRO_5003378748" description="Probable terminal-alkyne amino-acid exporter">
    <location>
        <begin position="1"/>
        <end position="297"/>
    </location>
</feature>
<feature type="transmembrane region" description="Helical" evidence="1">
    <location>
        <begin position="6"/>
        <end position="26"/>
    </location>
</feature>
<feature type="transmembrane region" description="Helical" evidence="1">
    <location>
        <begin position="32"/>
        <end position="52"/>
    </location>
</feature>
<feature type="transmembrane region" description="Helical" evidence="1">
    <location>
        <begin position="65"/>
        <end position="85"/>
    </location>
</feature>
<feature type="transmembrane region" description="Helical" evidence="1">
    <location>
        <begin position="95"/>
        <end position="115"/>
    </location>
</feature>
<feature type="transmembrane region" description="Helical" evidence="1">
    <location>
        <begin position="123"/>
        <end position="143"/>
    </location>
</feature>
<feature type="transmembrane region" description="Helical" evidence="1">
    <location>
        <begin position="150"/>
        <end position="170"/>
    </location>
</feature>
<feature type="transmembrane region" description="Helical" evidence="1">
    <location>
        <begin position="178"/>
        <end position="198"/>
    </location>
</feature>
<feature type="transmembrane region" description="Helical" evidence="1">
    <location>
        <begin position="212"/>
        <end position="232"/>
    </location>
</feature>
<feature type="transmembrane region" description="Helical" evidence="1">
    <location>
        <begin position="249"/>
        <end position="269"/>
    </location>
</feature>
<feature type="domain" description="EamA 1" evidence="1">
    <location>
        <begin position="6"/>
        <end position="137"/>
    </location>
</feature>
<feature type="domain" description="EamA 2" evidence="1">
    <location>
        <begin position="150"/>
        <end position="281"/>
    </location>
</feature>
<keyword id="KW-0029">Amino-acid transport</keyword>
<keyword id="KW-1003">Cell membrane</keyword>
<keyword id="KW-0472">Membrane</keyword>
<keyword id="KW-0614">Plasmid</keyword>
<keyword id="KW-1185">Reference proteome</keyword>
<keyword id="KW-0677">Repeat</keyword>
<keyword id="KW-0812">Transmembrane</keyword>
<keyword id="KW-1133">Transmembrane helix</keyword>
<keyword id="KW-0813">Transport</keyword>
<gene>
    <name evidence="2" type="primary">besF</name>
    <name evidence="5" type="ordered locus">SCATT_p06920</name>
</gene>
<proteinExistence type="inferred from homology"/>
<evidence type="ECO:0000255" key="1"/>
<evidence type="ECO:0000303" key="2">
    <source>
    </source>
</evidence>
<evidence type="ECO:0000305" key="3"/>
<evidence type="ECO:0000305" key="4">
    <source>
    </source>
</evidence>
<evidence type="ECO:0000312" key="5">
    <source>
        <dbReference type="EMBL" id="AEW98885.1"/>
    </source>
</evidence>
<organism>
    <name type="scientific">Streptantibioticus cattleyicolor (strain ATCC 35852 / DSM 46488 / JCM 4925 / NBRC 14057 / NRRL 8057)</name>
    <name type="common">Streptomyces cattleya</name>
    <dbReference type="NCBI Taxonomy" id="1003195"/>
    <lineage>
        <taxon>Bacteria</taxon>
        <taxon>Bacillati</taxon>
        <taxon>Actinomycetota</taxon>
        <taxon>Actinomycetes</taxon>
        <taxon>Kitasatosporales</taxon>
        <taxon>Streptomycetaceae</taxon>
        <taxon>Streptantibioticus</taxon>
    </lineage>
</organism>
<sequence length="297" mass="30538">MKLSKAVWALVLTVVTWASAFPAIRVGLDGYGVAGLSLSRLTVASVALAIAAGPLGVRRPRARDLPMIALCGATGMSAYQVLLNWGEVHVPAGTASLLIAIAPVFSVLLAAVFLGERMTWAQIAGSAVAISGAAVIAVAGGHARYTTSAWVVLAAAVVQGVYHFATKPLLARYTGLEVACYAMWAGTVFLLPLLPAMVHGFATAPVAATASTVYLGLLPSAIGFVSWGYAVARLSVASSTASLYLVPPVALVVAFVWLGEVPPPLALVGGALGIAGVMLINRRTLGRRREASTPGRR</sequence>
<accession>F8JJ22</accession>
<accession>G8XHD9</accession>
<name>BESF_STREN</name>